<evidence type="ECO:0000255" key="1">
    <source>
        <dbReference type="HAMAP-Rule" id="MF_00821"/>
    </source>
</evidence>
<proteinExistence type="inferred from homology"/>
<protein>
    <recommendedName>
        <fullName evidence="1">Protein-export protein SecB 1</fullName>
    </recommendedName>
</protein>
<comment type="function">
    <text evidence="1">One of the proteins required for the normal export of preproteins out of the cell cytoplasm. It is a molecular chaperone that binds to a subset of precursor proteins, maintaining them in a translocation-competent state. It also specifically binds to its receptor SecA.</text>
</comment>
<comment type="subunit">
    <text evidence="1">Homotetramer, a dimer of dimers. One homotetramer interacts with 1 SecA dimer.</text>
</comment>
<comment type="subcellular location">
    <subcellularLocation>
        <location evidence="1">Cytoplasm</location>
    </subcellularLocation>
</comment>
<comment type="similarity">
    <text evidence="1">Belongs to the SecB family.</text>
</comment>
<sequence>MDQQAQPQFQIQKVYVKDLSFSIPNSDKIWTTNWKPELHTDLKVEATKLPEENTYETVLTLEVKVENDGMVAFEAEVKQAGIFTVANMQEAQIEHAKKAFCPNILYHYAREAISDLVISGGFPQLCLSAVNFDAMYQDSLKESADSKQH</sequence>
<organism>
    <name type="scientific">Francisella tularensis subsp. novicida (strain U112)</name>
    <dbReference type="NCBI Taxonomy" id="401614"/>
    <lineage>
        <taxon>Bacteria</taxon>
        <taxon>Pseudomonadati</taxon>
        <taxon>Pseudomonadota</taxon>
        <taxon>Gammaproteobacteria</taxon>
        <taxon>Thiotrichales</taxon>
        <taxon>Francisellaceae</taxon>
        <taxon>Francisella</taxon>
    </lineage>
</organism>
<dbReference type="EMBL" id="CP000439">
    <property type="protein sequence ID" value="ABK89032.1"/>
    <property type="molecule type" value="Genomic_DNA"/>
</dbReference>
<dbReference type="SMR" id="A0Q467"/>
<dbReference type="KEGG" id="ftn:FTN_0121"/>
<dbReference type="KEGG" id="ftx:AW25_79"/>
<dbReference type="BioCyc" id="FTUL401614:G1G75-125-MONOMER"/>
<dbReference type="Proteomes" id="UP000000762">
    <property type="component" value="Chromosome"/>
</dbReference>
<dbReference type="GO" id="GO:0005737">
    <property type="term" value="C:cytoplasm"/>
    <property type="evidence" value="ECO:0007669"/>
    <property type="project" value="UniProtKB-SubCell"/>
</dbReference>
<dbReference type="GO" id="GO:0051082">
    <property type="term" value="F:unfolded protein binding"/>
    <property type="evidence" value="ECO:0007669"/>
    <property type="project" value="InterPro"/>
</dbReference>
<dbReference type="GO" id="GO:0006457">
    <property type="term" value="P:protein folding"/>
    <property type="evidence" value="ECO:0007669"/>
    <property type="project" value="UniProtKB-UniRule"/>
</dbReference>
<dbReference type="GO" id="GO:0051262">
    <property type="term" value="P:protein tetramerization"/>
    <property type="evidence" value="ECO:0007669"/>
    <property type="project" value="InterPro"/>
</dbReference>
<dbReference type="GO" id="GO:0015031">
    <property type="term" value="P:protein transport"/>
    <property type="evidence" value="ECO:0007669"/>
    <property type="project" value="UniProtKB-UniRule"/>
</dbReference>
<dbReference type="Gene3D" id="3.10.420.10">
    <property type="entry name" value="SecB-like"/>
    <property type="match status" value="1"/>
</dbReference>
<dbReference type="HAMAP" id="MF_00821">
    <property type="entry name" value="SecB"/>
    <property type="match status" value="1"/>
</dbReference>
<dbReference type="InterPro" id="IPR003708">
    <property type="entry name" value="SecB"/>
</dbReference>
<dbReference type="InterPro" id="IPR035958">
    <property type="entry name" value="SecB-like_sf"/>
</dbReference>
<dbReference type="NCBIfam" id="NF004393">
    <property type="entry name" value="PRK05751.1-4"/>
    <property type="match status" value="1"/>
</dbReference>
<dbReference type="NCBIfam" id="NF009590">
    <property type="entry name" value="PRK13031.1"/>
    <property type="match status" value="1"/>
</dbReference>
<dbReference type="NCBIfam" id="TIGR00809">
    <property type="entry name" value="secB"/>
    <property type="match status" value="1"/>
</dbReference>
<dbReference type="PANTHER" id="PTHR36918">
    <property type="match status" value="1"/>
</dbReference>
<dbReference type="PANTHER" id="PTHR36918:SF1">
    <property type="entry name" value="PROTEIN-EXPORT PROTEIN SECB"/>
    <property type="match status" value="1"/>
</dbReference>
<dbReference type="Pfam" id="PF02556">
    <property type="entry name" value="SecB"/>
    <property type="match status" value="1"/>
</dbReference>
<dbReference type="PRINTS" id="PR01594">
    <property type="entry name" value="SECBCHAPRONE"/>
</dbReference>
<dbReference type="SUPFAM" id="SSF54611">
    <property type="entry name" value="SecB-like"/>
    <property type="match status" value="1"/>
</dbReference>
<name>SECB1_FRATN</name>
<feature type="chain" id="PRO_0000318233" description="Protein-export protein SecB 1">
    <location>
        <begin position="1"/>
        <end position="149"/>
    </location>
</feature>
<reference key="1">
    <citation type="journal article" date="2007" name="Genome Biol.">
        <title>Comparison of Francisella tularensis genomes reveals evolutionary events associated with the emergence of human pathogenic strains.</title>
        <authorList>
            <person name="Rohmer L."/>
            <person name="Fong C."/>
            <person name="Abmayr S."/>
            <person name="Wasnick M."/>
            <person name="Larson Freeman T.J."/>
            <person name="Radey M."/>
            <person name="Guina T."/>
            <person name="Svensson K."/>
            <person name="Hayden H.S."/>
            <person name="Jacobs M."/>
            <person name="Gallagher L.A."/>
            <person name="Manoil C."/>
            <person name="Ernst R.K."/>
            <person name="Drees B."/>
            <person name="Buckley D."/>
            <person name="Haugen E."/>
            <person name="Bovee D."/>
            <person name="Zhou Y."/>
            <person name="Chang J."/>
            <person name="Levy R."/>
            <person name="Lim R."/>
            <person name="Gillett W."/>
            <person name="Guenthener D."/>
            <person name="Kang A."/>
            <person name="Shaffer S.A."/>
            <person name="Taylor G."/>
            <person name="Chen J."/>
            <person name="Gallis B."/>
            <person name="D'Argenio D.A."/>
            <person name="Forsman M."/>
            <person name="Olson M.V."/>
            <person name="Goodlett D.R."/>
            <person name="Kaul R."/>
            <person name="Miller S.I."/>
            <person name="Brittnacher M.J."/>
        </authorList>
    </citation>
    <scope>NUCLEOTIDE SEQUENCE [LARGE SCALE GENOMIC DNA]</scope>
    <source>
        <strain>U112</strain>
    </source>
</reference>
<accession>A0Q467</accession>
<keyword id="KW-0143">Chaperone</keyword>
<keyword id="KW-0963">Cytoplasm</keyword>
<keyword id="KW-0653">Protein transport</keyword>
<keyword id="KW-0811">Translocation</keyword>
<keyword id="KW-0813">Transport</keyword>
<gene>
    <name evidence="1" type="primary">secB1</name>
    <name type="ordered locus">FTN_0121</name>
</gene>